<reference key="1">
    <citation type="journal article" date="2008" name="Genome Res.">
        <title>Comparative genome analysis of Salmonella enteritidis PT4 and Salmonella gallinarum 287/91 provides insights into evolutionary and host adaptation pathways.</title>
        <authorList>
            <person name="Thomson N.R."/>
            <person name="Clayton D.J."/>
            <person name="Windhorst D."/>
            <person name="Vernikos G."/>
            <person name="Davidson S."/>
            <person name="Churcher C."/>
            <person name="Quail M.A."/>
            <person name="Stevens M."/>
            <person name="Jones M.A."/>
            <person name="Watson M."/>
            <person name="Barron A."/>
            <person name="Layton A."/>
            <person name="Pickard D."/>
            <person name="Kingsley R.A."/>
            <person name="Bignell A."/>
            <person name="Clark L."/>
            <person name="Harris B."/>
            <person name="Ormond D."/>
            <person name="Abdellah Z."/>
            <person name="Brooks K."/>
            <person name="Cherevach I."/>
            <person name="Chillingworth T."/>
            <person name="Woodward J."/>
            <person name="Norberczak H."/>
            <person name="Lord A."/>
            <person name="Arrowsmith C."/>
            <person name="Jagels K."/>
            <person name="Moule S."/>
            <person name="Mungall K."/>
            <person name="Saunders M."/>
            <person name="Whitehead S."/>
            <person name="Chabalgoity J.A."/>
            <person name="Maskell D."/>
            <person name="Humphreys T."/>
            <person name="Roberts M."/>
            <person name="Barrow P.A."/>
            <person name="Dougan G."/>
            <person name="Parkhill J."/>
        </authorList>
    </citation>
    <scope>NUCLEOTIDE SEQUENCE [LARGE SCALE GENOMIC DNA]</scope>
    <source>
        <strain>287/91 / NCTC 13346</strain>
    </source>
</reference>
<accession>B5RDQ4</accession>
<name>FTSB_SALG2</name>
<keyword id="KW-0131">Cell cycle</keyword>
<keyword id="KW-0132">Cell division</keyword>
<keyword id="KW-0997">Cell inner membrane</keyword>
<keyword id="KW-1003">Cell membrane</keyword>
<keyword id="KW-0175">Coiled coil</keyword>
<keyword id="KW-0472">Membrane</keyword>
<keyword id="KW-0812">Transmembrane</keyword>
<keyword id="KW-1133">Transmembrane helix</keyword>
<protein>
    <recommendedName>
        <fullName evidence="1">Cell division protein FtsB</fullName>
    </recommendedName>
</protein>
<feature type="chain" id="PRO_1000129940" description="Cell division protein FtsB">
    <location>
        <begin position="1"/>
        <end position="103"/>
    </location>
</feature>
<feature type="topological domain" description="Cytoplasmic" evidence="1">
    <location>
        <begin position="1"/>
        <end position="3"/>
    </location>
</feature>
<feature type="transmembrane region" description="Helical" evidence="1">
    <location>
        <begin position="4"/>
        <end position="21"/>
    </location>
</feature>
<feature type="topological domain" description="Periplasmic" evidence="1">
    <location>
        <begin position="22"/>
        <end position="103"/>
    </location>
</feature>
<feature type="coiled-coil region" evidence="1">
    <location>
        <begin position="33"/>
        <end position="62"/>
    </location>
</feature>
<proteinExistence type="inferred from homology"/>
<organism>
    <name type="scientific">Salmonella gallinarum (strain 287/91 / NCTC 13346)</name>
    <dbReference type="NCBI Taxonomy" id="550538"/>
    <lineage>
        <taxon>Bacteria</taxon>
        <taxon>Pseudomonadati</taxon>
        <taxon>Pseudomonadota</taxon>
        <taxon>Gammaproteobacteria</taxon>
        <taxon>Enterobacterales</taxon>
        <taxon>Enterobacteriaceae</taxon>
        <taxon>Salmonella</taxon>
    </lineage>
</organism>
<comment type="function">
    <text evidence="1">Essential cell division protein. May link together the upstream cell division proteins, which are predominantly cytoplasmic, with the downstream cell division proteins, which are predominantly periplasmic.</text>
</comment>
<comment type="subunit">
    <text evidence="1">Part of a complex composed of FtsB, FtsL and FtsQ.</text>
</comment>
<comment type="subcellular location">
    <subcellularLocation>
        <location evidence="1">Cell inner membrane</location>
        <topology evidence="1">Single-pass type II membrane protein</topology>
    </subcellularLocation>
    <text evidence="1">Localizes to the division septum.</text>
</comment>
<comment type="similarity">
    <text evidence="1">Belongs to the FtsB family.</text>
</comment>
<sequence>MGKLTLLLLALLVWLQYSLWFGKNGIHDYSRVNDDVVAQQATNAKLKARNDQLFAEIDDLNGGQEAIEERARNELSMTKPGETFYRLVPDASKRAATAGQTHR</sequence>
<gene>
    <name evidence="1" type="primary">ftsB</name>
    <name type="ordered locus">SG2834</name>
</gene>
<evidence type="ECO:0000255" key="1">
    <source>
        <dbReference type="HAMAP-Rule" id="MF_00599"/>
    </source>
</evidence>
<dbReference type="EMBL" id="AM933173">
    <property type="protein sequence ID" value="CAR38642.1"/>
    <property type="molecule type" value="Genomic_DNA"/>
</dbReference>
<dbReference type="RefSeq" id="WP_000517480.1">
    <property type="nucleotide sequence ID" value="NC_011274.1"/>
</dbReference>
<dbReference type="SMR" id="B5RDQ4"/>
<dbReference type="KEGG" id="seg:SG2834"/>
<dbReference type="HOGENOM" id="CLU_134863_5_2_6"/>
<dbReference type="Proteomes" id="UP000008321">
    <property type="component" value="Chromosome"/>
</dbReference>
<dbReference type="GO" id="GO:0032153">
    <property type="term" value="C:cell division site"/>
    <property type="evidence" value="ECO:0007669"/>
    <property type="project" value="UniProtKB-UniRule"/>
</dbReference>
<dbReference type="GO" id="GO:0030428">
    <property type="term" value="C:cell septum"/>
    <property type="evidence" value="ECO:0007669"/>
    <property type="project" value="TreeGrafter"/>
</dbReference>
<dbReference type="GO" id="GO:0005886">
    <property type="term" value="C:plasma membrane"/>
    <property type="evidence" value="ECO:0007669"/>
    <property type="project" value="UniProtKB-SubCell"/>
</dbReference>
<dbReference type="GO" id="GO:0043093">
    <property type="term" value="P:FtsZ-dependent cytokinesis"/>
    <property type="evidence" value="ECO:0007669"/>
    <property type="project" value="UniProtKB-UniRule"/>
</dbReference>
<dbReference type="FunFam" id="1.20.5.400:FF:000001">
    <property type="entry name" value="Cell division protein FtsB"/>
    <property type="match status" value="1"/>
</dbReference>
<dbReference type="Gene3D" id="1.20.5.400">
    <property type="match status" value="1"/>
</dbReference>
<dbReference type="HAMAP" id="MF_00599">
    <property type="entry name" value="FtsB"/>
    <property type="match status" value="1"/>
</dbReference>
<dbReference type="InterPro" id="IPR023081">
    <property type="entry name" value="Cell_div_FtsB"/>
</dbReference>
<dbReference type="InterPro" id="IPR007060">
    <property type="entry name" value="FtsL/DivIC"/>
</dbReference>
<dbReference type="NCBIfam" id="NF002058">
    <property type="entry name" value="PRK00888.1"/>
    <property type="match status" value="1"/>
</dbReference>
<dbReference type="PANTHER" id="PTHR37485">
    <property type="entry name" value="CELL DIVISION PROTEIN FTSB"/>
    <property type="match status" value="1"/>
</dbReference>
<dbReference type="PANTHER" id="PTHR37485:SF1">
    <property type="entry name" value="CELL DIVISION PROTEIN FTSB"/>
    <property type="match status" value="1"/>
</dbReference>
<dbReference type="Pfam" id="PF04977">
    <property type="entry name" value="DivIC"/>
    <property type="match status" value="1"/>
</dbReference>